<protein>
    <recommendedName>
        <fullName evidence="2">Lipase chaperone</fullName>
    </recommendedName>
    <alternativeName>
        <fullName evidence="2">Lipase activator protein</fullName>
    </alternativeName>
    <alternativeName>
        <fullName evidence="2">Lipase foldase</fullName>
    </alternativeName>
    <alternativeName>
        <fullName evidence="2">Lipase helper protein</fullName>
    </alternativeName>
    <alternativeName>
        <fullName evidence="2">Lipase modulator</fullName>
    </alternativeName>
</protein>
<proteinExistence type="inferred from homology"/>
<accession>A4VL35</accession>
<gene>
    <name evidence="2" type="primary">lifO</name>
    <name type="ordered locus">PST_2015</name>
</gene>
<sequence>MSGSILLLPLAIALGLGFFIARPESTVTPVAEAPTSSPAANLTAARPAQRTATGAAPQVTAKLPASFKGTEVDGQFQLDAAGNLIIGPELRQLFDYFLSAIGEEPLKQSIERLRRHIAAQLPEPAQAQALAVLNQYLNYKRQLVDFEAQHPRVADLASMRDRLSAVRALRAHALDPATHQAFFGLEEAYDHFSLERLAIRFDPALDSDAKGRAIDQLRAGLPAELQDLLMPQLQTELREQTTALLANGAGPQQLRQLRQQLVGSEAADRLEALDLQRRQWQQRVASYQQERTRIETARGLDEVERRAAVERLEAQRFSDSERLRLLAVVQEDRTR</sequence>
<keyword id="KW-0997">Cell inner membrane</keyword>
<keyword id="KW-1003">Cell membrane</keyword>
<keyword id="KW-0143">Chaperone</keyword>
<keyword id="KW-0442">Lipid degradation</keyword>
<keyword id="KW-0443">Lipid metabolism</keyword>
<keyword id="KW-0472">Membrane</keyword>
<keyword id="KW-1185">Reference proteome</keyword>
<keyword id="KW-0812">Transmembrane</keyword>
<keyword id="KW-1133">Transmembrane helix</keyword>
<name>LIFO_STUS1</name>
<evidence type="ECO:0000250" key="1"/>
<evidence type="ECO:0000255" key="2">
    <source>
        <dbReference type="HAMAP-Rule" id="MF_00790"/>
    </source>
</evidence>
<comment type="function">
    <text evidence="2">May be involved in the folding of the extracellular lipase during its passage through the periplasm.</text>
</comment>
<comment type="subcellular location">
    <subcellularLocation>
        <location evidence="2">Cell inner membrane</location>
        <topology evidence="2">Single-pass membrane protein</topology>
        <orientation evidence="1">Periplasmic side</orientation>
    </subcellularLocation>
</comment>
<comment type="similarity">
    <text evidence="2">Belongs to the lipase chaperone family.</text>
</comment>
<organism>
    <name type="scientific">Stutzerimonas stutzeri (strain A1501)</name>
    <name type="common">Pseudomonas stutzeri</name>
    <dbReference type="NCBI Taxonomy" id="379731"/>
    <lineage>
        <taxon>Bacteria</taxon>
        <taxon>Pseudomonadati</taxon>
        <taxon>Pseudomonadota</taxon>
        <taxon>Gammaproteobacteria</taxon>
        <taxon>Pseudomonadales</taxon>
        <taxon>Pseudomonadaceae</taxon>
        <taxon>Stutzerimonas</taxon>
    </lineage>
</organism>
<feature type="chain" id="PRO_1000046916" description="Lipase chaperone">
    <location>
        <begin position="1"/>
        <end position="335"/>
    </location>
</feature>
<feature type="transmembrane region" description="Helical" evidence="2">
    <location>
        <begin position="1"/>
        <end position="21"/>
    </location>
</feature>
<dbReference type="EMBL" id="CP000304">
    <property type="protein sequence ID" value="ABP79686.1"/>
    <property type="molecule type" value="Genomic_DNA"/>
</dbReference>
<dbReference type="RefSeq" id="WP_011913156.1">
    <property type="nucleotide sequence ID" value="NC_009434.1"/>
</dbReference>
<dbReference type="SMR" id="A4VL35"/>
<dbReference type="KEGG" id="psa:PST_2015"/>
<dbReference type="eggNOG" id="COG5380">
    <property type="taxonomic scope" value="Bacteria"/>
</dbReference>
<dbReference type="HOGENOM" id="CLU_064928_0_0_6"/>
<dbReference type="Proteomes" id="UP000000233">
    <property type="component" value="Chromosome"/>
</dbReference>
<dbReference type="GO" id="GO:0005886">
    <property type="term" value="C:plasma membrane"/>
    <property type="evidence" value="ECO:0007669"/>
    <property type="project" value="UniProtKB-SubCell"/>
</dbReference>
<dbReference type="GO" id="GO:0051082">
    <property type="term" value="F:unfolded protein binding"/>
    <property type="evidence" value="ECO:0007669"/>
    <property type="project" value="UniProtKB-UniRule"/>
</dbReference>
<dbReference type="GO" id="GO:0016042">
    <property type="term" value="P:lipid catabolic process"/>
    <property type="evidence" value="ECO:0007669"/>
    <property type="project" value="UniProtKB-UniRule"/>
</dbReference>
<dbReference type="GO" id="GO:0006457">
    <property type="term" value="P:protein folding"/>
    <property type="evidence" value="ECO:0007669"/>
    <property type="project" value="UniProtKB-UniRule"/>
</dbReference>
<dbReference type="HAMAP" id="MF_00790">
    <property type="entry name" value="Lipase_chap"/>
    <property type="match status" value="1"/>
</dbReference>
<dbReference type="InterPro" id="IPR004961">
    <property type="entry name" value="Lipase_chaperone"/>
</dbReference>
<dbReference type="NCBIfam" id="NF002334">
    <property type="entry name" value="PRK01294.1-2"/>
    <property type="match status" value="1"/>
</dbReference>
<dbReference type="Pfam" id="PF03280">
    <property type="entry name" value="Lipase_chap"/>
    <property type="match status" value="1"/>
</dbReference>
<dbReference type="SUPFAM" id="SSF158855">
    <property type="entry name" value="Lipase chaperone-like"/>
    <property type="match status" value="1"/>
</dbReference>
<reference key="1">
    <citation type="journal article" date="2008" name="Proc. Natl. Acad. Sci. U.S.A.">
        <title>Nitrogen fixation island and rhizosphere competence traits in the genome of root-associated Pseudomonas stutzeri A1501.</title>
        <authorList>
            <person name="Yan Y."/>
            <person name="Yang J."/>
            <person name="Dou Y."/>
            <person name="Chen M."/>
            <person name="Ping S."/>
            <person name="Peng J."/>
            <person name="Lu W."/>
            <person name="Zhang W."/>
            <person name="Yao Z."/>
            <person name="Li H."/>
            <person name="Liu W."/>
            <person name="He S."/>
            <person name="Geng L."/>
            <person name="Zhang X."/>
            <person name="Yang F."/>
            <person name="Yu H."/>
            <person name="Zhan Y."/>
            <person name="Li D."/>
            <person name="Lin Z."/>
            <person name="Wang Y."/>
            <person name="Elmerich C."/>
            <person name="Lin M."/>
            <person name="Jin Q."/>
        </authorList>
    </citation>
    <scope>NUCLEOTIDE SEQUENCE [LARGE SCALE GENOMIC DNA]</scope>
    <source>
        <strain>A1501</strain>
    </source>
</reference>